<evidence type="ECO:0000255" key="1">
    <source>
        <dbReference type="HAMAP-Rule" id="MF_00096"/>
    </source>
</evidence>
<feature type="chain" id="PRO_0000335134" description="DNA mismatch repair protein MutS">
    <location>
        <begin position="1"/>
        <end position="872"/>
    </location>
</feature>
<feature type="binding site" evidence="1">
    <location>
        <begin position="626"/>
        <end position="633"/>
    </location>
    <ligand>
        <name>ATP</name>
        <dbReference type="ChEBI" id="CHEBI:30616"/>
    </ligand>
</feature>
<name>MUTS_CHLPD</name>
<reference key="1">
    <citation type="submission" date="2006-12" db="EMBL/GenBank/DDBJ databases">
        <title>Complete sequence of Chlorobium phaeobacteroides DSM 266.</title>
        <authorList>
            <consortium name="US DOE Joint Genome Institute"/>
            <person name="Copeland A."/>
            <person name="Lucas S."/>
            <person name="Lapidus A."/>
            <person name="Barry K."/>
            <person name="Detter J.C."/>
            <person name="Glavina del Rio T."/>
            <person name="Hammon N."/>
            <person name="Israni S."/>
            <person name="Pitluck S."/>
            <person name="Goltsman E."/>
            <person name="Schmutz J."/>
            <person name="Larimer F."/>
            <person name="Land M."/>
            <person name="Hauser L."/>
            <person name="Mikhailova N."/>
            <person name="Li T."/>
            <person name="Overmann J."/>
            <person name="Bryant D.A."/>
            <person name="Richardson P."/>
        </authorList>
    </citation>
    <scope>NUCLEOTIDE SEQUENCE [LARGE SCALE GENOMIC DNA]</scope>
    <source>
        <strain>DSM 266 / SMG 266 / 2430</strain>
    </source>
</reference>
<proteinExistence type="inferred from homology"/>
<protein>
    <recommendedName>
        <fullName evidence="1">DNA mismatch repair protein MutS</fullName>
    </recommendedName>
</protein>
<gene>
    <name evidence="1" type="primary">mutS</name>
    <name type="ordered locus">Cpha266_1896</name>
</gene>
<organism>
    <name type="scientific">Chlorobium phaeobacteroides (strain DSM 266 / SMG 266 / 2430)</name>
    <dbReference type="NCBI Taxonomy" id="290317"/>
    <lineage>
        <taxon>Bacteria</taxon>
        <taxon>Pseudomonadati</taxon>
        <taxon>Chlorobiota</taxon>
        <taxon>Chlorobiia</taxon>
        <taxon>Chlorobiales</taxon>
        <taxon>Chlorobiaceae</taxon>
        <taxon>Chlorobium/Pelodictyon group</taxon>
        <taxon>Chlorobium</taxon>
    </lineage>
</organism>
<accession>A1BHN5</accession>
<dbReference type="EMBL" id="CP000492">
    <property type="protein sequence ID" value="ABL65912.1"/>
    <property type="molecule type" value="Genomic_DNA"/>
</dbReference>
<dbReference type="RefSeq" id="WP_011745719.1">
    <property type="nucleotide sequence ID" value="NC_008639.1"/>
</dbReference>
<dbReference type="SMR" id="A1BHN5"/>
<dbReference type="STRING" id="290317.Cpha266_1896"/>
<dbReference type="KEGG" id="cph:Cpha266_1896"/>
<dbReference type="eggNOG" id="COG0249">
    <property type="taxonomic scope" value="Bacteria"/>
</dbReference>
<dbReference type="HOGENOM" id="CLU_002472_3_1_10"/>
<dbReference type="OrthoDB" id="9802448at2"/>
<dbReference type="Proteomes" id="UP000008701">
    <property type="component" value="Chromosome"/>
</dbReference>
<dbReference type="GO" id="GO:0005829">
    <property type="term" value="C:cytosol"/>
    <property type="evidence" value="ECO:0007669"/>
    <property type="project" value="TreeGrafter"/>
</dbReference>
<dbReference type="GO" id="GO:0005524">
    <property type="term" value="F:ATP binding"/>
    <property type="evidence" value="ECO:0007669"/>
    <property type="project" value="UniProtKB-UniRule"/>
</dbReference>
<dbReference type="GO" id="GO:0140664">
    <property type="term" value="F:ATP-dependent DNA damage sensor activity"/>
    <property type="evidence" value="ECO:0007669"/>
    <property type="project" value="InterPro"/>
</dbReference>
<dbReference type="GO" id="GO:0003684">
    <property type="term" value="F:damaged DNA binding"/>
    <property type="evidence" value="ECO:0007669"/>
    <property type="project" value="UniProtKB-UniRule"/>
</dbReference>
<dbReference type="GO" id="GO:0030983">
    <property type="term" value="F:mismatched DNA binding"/>
    <property type="evidence" value="ECO:0007669"/>
    <property type="project" value="InterPro"/>
</dbReference>
<dbReference type="GO" id="GO:0006298">
    <property type="term" value="P:mismatch repair"/>
    <property type="evidence" value="ECO:0007669"/>
    <property type="project" value="UniProtKB-UniRule"/>
</dbReference>
<dbReference type="CDD" id="cd03284">
    <property type="entry name" value="ABC_MutS1"/>
    <property type="match status" value="1"/>
</dbReference>
<dbReference type="FunFam" id="3.40.1170.10:FF:000001">
    <property type="entry name" value="DNA mismatch repair protein MutS"/>
    <property type="match status" value="1"/>
</dbReference>
<dbReference type="FunFam" id="3.40.50.300:FF:000870">
    <property type="entry name" value="MutS protein homolog 4"/>
    <property type="match status" value="1"/>
</dbReference>
<dbReference type="Gene3D" id="1.10.1420.10">
    <property type="match status" value="2"/>
</dbReference>
<dbReference type="Gene3D" id="3.40.1170.10">
    <property type="entry name" value="DNA repair protein MutS, domain I"/>
    <property type="match status" value="1"/>
</dbReference>
<dbReference type="Gene3D" id="3.30.420.110">
    <property type="entry name" value="MutS, connector domain"/>
    <property type="match status" value="1"/>
</dbReference>
<dbReference type="Gene3D" id="3.40.50.300">
    <property type="entry name" value="P-loop containing nucleotide triphosphate hydrolases"/>
    <property type="match status" value="1"/>
</dbReference>
<dbReference type="HAMAP" id="MF_00096">
    <property type="entry name" value="MutS"/>
    <property type="match status" value="1"/>
</dbReference>
<dbReference type="InterPro" id="IPR005748">
    <property type="entry name" value="DNA_mismatch_repair_MutS"/>
</dbReference>
<dbReference type="InterPro" id="IPR007695">
    <property type="entry name" value="DNA_mismatch_repair_MutS-lik_N"/>
</dbReference>
<dbReference type="InterPro" id="IPR017261">
    <property type="entry name" value="DNA_mismatch_repair_MutS/MSH"/>
</dbReference>
<dbReference type="InterPro" id="IPR000432">
    <property type="entry name" value="DNA_mismatch_repair_MutS_C"/>
</dbReference>
<dbReference type="InterPro" id="IPR007861">
    <property type="entry name" value="DNA_mismatch_repair_MutS_clamp"/>
</dbReference>
<dbReference type="InterPro" id="IPR007696">
    <property type="entry name" value="DNA_mismatch_repair_MutS_core"/>
</dbReference>
<dbReference type="InterPro" id="IPR016151">
    <property type="entry name" value="DNA_mismatch_repair_MutS_N"/>
</dbReference>
<dbReference type="InterPro" id="IPR036187">
    <property type="entry name" value="DNA_mismatch_repair_MutS_sf"/>
</dbReference>
<dbReference type="InterPro" id="IPR007860">
    <property type="entry name" value="DNA_mmatch_repair_MutS_con_dom"/>
</dbReference>
<dbReference type="InterPro" id="IPR045076">
    <property type="entry name" value="MutS"/>
</dbReference>
<dbReference type="InterPro" id="IPR036678">
    <property type="entry name" value="MutS_con_dom_sf"/>
</dbReference>
<dbReference type="InterPro" id="IPR027417">
    <property type="entry name" value="P-loop_NTPase"/>
</dbReference>
<dbReference type="NCBIfam" id="TIGR01070">
    <property type="entry name" value="mutS1"/>
    <property type="match status" value="1"/>
</dbReference>
<dbReference type="NCBIfam" id="NF003810">
    <property type="entry name" value="PRK05399.1"/>
    <property type="match status" value="1"/>
</dbReference>
<dbReference type="PANTHER" id="PTHR11361:SF34">
    <property type="entry name" value="DNA MISMATCH REPAIR PROTEIN MSH1, MITOCHONDRIAL"/>
    <property type="match status" value="1"/>
</dbReference>
<dbReference type="PANTHER" id="PTHR11361">
    <property type="entry name" value="DNA MISMATCH REPAIR PROTEIN MUTS FAMILY MEMBER"/>
    <property type="match status" value="1"/>
</dbReference>
<dbReference type="Pfam" id="PF01624">
    <property type="entry name" value="MutS_I"/>
    <property type="match status" value="1"/>
</dbReference>
<dbReference type="Pfam" id="PF05188">
    <property type="entry name" value="MutS_II"/>
    <property type="match status" value="1"/>
</dbReference>
<dbReference type="Pfam" id="PF05192">
    <property type="entry name" value="MutS_III"/>
    <property type="match status" value="1"/>
</dbReference>
<dbReference type="Pfam" id="PF05190">
    <property type="entry name" value="MutS_IV"/>
    <property type="match status" value="1"/>
</dbReference>
<dbReference type="Pfam" id="PF00488">
    <property type="entry name" value="MutS_V"/>
    <property type="match status" value="1"/>
</dbReference>
<dbReference type="PIRSF" id="PIRSF037677">
    <property type="entry name" value="DNA_mis_repair_Msh6"/>
    <property type="match status" value="1"/>
</dbReference>
<dbReference type="SMART" id="SM00534">
    <property type="entry name" value="MUTSac"/>
    <property type="match status" value="1"/>
</dbReference>
<dbReference type="SMART" id="SM00533">
    <property type="entry name" value="MUTSd"/>
    <property type="match status" value="1"/>
</dbReference>
<dbReference type="SUPFAM" id="SSF55271">
    <property type="entry name" value="DNA repair protein MutS, domain I"/>
    <property type="match status" value="1"/>
</dbReference>
<dbReference type="SUPFAM" id="SSF53150">
    <property type="entry name" value="DNA repair protein MutS, domain II"/>
    <property type="match status" value="1"/>
</dbReference>
<dbReference type="SUPFAM" id="SSF48334">
    <property type="entry name" value="DNA repair protein MutS, domain III"/>
    <property type="match status" value="1"/>
</dbReference>
<dbReference type="SUPFAM" id="SSF52540">
    <property type="entry name" value="P-loop containing nucleoside triphosphate hydrolases"/>
    <property type="match status" value="1"/>
</dbReference>
<dbReference type="PROSITE" id="PS00486">
    <property type="entry name" value="DNA_MISMATCH_REPAIR_2"/>
    <property type="match status" value="1"/>
</dbReference>
<sequence>MSSPPREHSPMMRQYLDVKERYPDYLLLFRVGDFYETFFDDAKEVSSALNIVLTRRSNGSSSEVPMAGFPHHASEGYIARLVKKGYKVAVCDQVEDPSEAKGIVRREITDIVTPGITYSDKILDDRHNNYLCALALLKEGRRVVAGAAFIDVTTAEFKIAELLPEEVADFVRSLHPAELLIARKEKERFEPVRKEFPPDMVVTELDDWMFGEDQASAVLARQFKTHSLKGFGIHGNSAGKVAAGVILQYLEETRQNRLHYITRIGTLQNTDYMTLDLQTRRNLEIISSMQDGTINGSLLQVIDRTANPMGARLIRRWLQSPLKRLEDIALRLDAVEEFKDFSPLRREVHGHLSEINDLERVLSRIATFRSIPREMRQFGSALSKIPLLKEALLQTTTARLQALGRSLVEMPELVALIEKAVDPEAGASMRDGGYIRAGYHQELDELRTIASTAKDRLLEIQQEERARTSISSLKVQFNKVFGYYIEISKSNLDKVPDYYEKKQTLVNAERFTIPALKEYEAKILNAEEKSIVLEQRLFHDLSLLIAEQAALVQTNAAVIAEIDCLASFAAVAEEYGYCKPEVAGHDRLLVTGGRHPVLERMMSTDDPYVSNDLLFDRKQRLLIITGPNMAGKSSYLRQAGLIVLLAQAGSFVPAQKAEIGLVDRIFTRVGASDNLASGESTFLVEMNEAASILNNATSKSLLLLDEIGRGTSTSDGMSIAWSMSEFIHDSIGARTLFATHYHELAELETRLQGVVNYNATVIETAEKVIFLRKIVRGASDNSYGIEVARMAGMPQEVIVRAKEILAGMEKREIDVSGIKQPSIESMQISLFEEADSRLRTAIENLDLDRLTPLDALIELKKLQDLALKGCGR</sequence>
<comment type="function">
    <text evidence="1">This protein is involved in the repair of mismatches in DNA. It is possible that it carries out the mismatch recognition step. This protein has a weak ATPase activity.</text>
</comment>
<comment type="similarity">
    <text evidence="1">Belongs to the DNA mismatch repair MutS family.</text>
</comment>
<keyword id="KW-0067">ATP-binding</keyword>
<keyword id="KW-0227">DNA damage</keyword>
<keyword id="KW-0234">DNA repair</keyword>
<keyword id="KW-0238">DNA-binding</keyword>
<keyword id="KW-0547">Nucleotide-binding</keyword>
<keyword id="KW-1185">Reference proteome</keyword>